<feature type="chain" id="PRO_0000358210" description="NAD(P)H-quinone oxidoreductase subunit J">
    <location>
        <begin position="1"/>
        <end position="183"/>
    </location>
</feature>
<feature type="region of interest" description="Disordered" evidence="2">
    <location>
        <begin position="1"/>
        <end position="21"/>
    </location>
</feature>
<keyword id="KW-0472">Membrane</keyword>
<keyword id="KW-0520">NAD</keyword>
<keyword id="KW-0521">NADP</keyword>
<keyword id="KW-0618">Plastoquinone</keyword>
<keyword id="KW-0874">Quinone</keyword>
<keyword id="KW-1185">Reference proteome</keyword>
<keyword id="KW-0793">Thylakoid</keyword>
<keyword id="KW-1278">Translocase</keyword>
<keyword id="KW-0813">Transport</keyword>
<reference key="1">
    <citation type="journal article" date="2007" name="ISME J.">
        <title>Population level functional diversity in a microbial community revealed by comparative genomic and metagenomic analyses.</title>
        <authorList>
            <person name="Bhaya D."/>
            <person name="Grossman A.R."/>
            <person name="Steunou A.-S."/>
            <person name="Khuri N."/>
            <person name="Cohan F.M."/>
            <person name="Hamamura N."/>
            <person name="Melendrez M.C."/>
            <person name="Bateson M.M."/>
            <person name="Ward D.M."/>
            <person name="Heidelberg J.F."/>
        </authorList>
    </citation>
    <scope>NUCLEOTIDE SEQUENCE [LARGE SCALE GENOMIC DNA]</scope>
    <source>
        <strain>JA-2-3B'a(2-13)</strain>
    </source>
</reference>
<protein>
    <recommendedName>
        <fullName evidence="1">NAD(P)H-quinone oxidoreductase subunit J</fullName>
        <ecNumber evidence="1">7.1.1.-</ecNumber>
    </recommendedName>
    <alternativeName>
        <fullName>NAD(P)H dehydrogenase subunit J</fullName>
    </alternativeName>
    <alternativeName>
        <fullName evidence="1">NADH-plastoquinone oxidoreductase subunit J</fullName>
    </alternativeName>
    <alternativeName>
        <fullName evidence="1">NDH-1 subunit J</fullName>
        <shortName evidence="1">NDH-J</shortName>
    </alternativeName>
</protein>
<sequence>MAEENAQEKQAPPSAGEQSEPLVTLERGPVSQFLADNGFEHQYLGRDAAGVELLEVERDFLLPLCTALYAYGFNYLECQCGYDLGAGQPLVSLYHLIKLSDGADRPQEVRLQVKLPRQDPRLPSVYWIWKSADWQERETYDMYGIVFEGHPNLKRILMPEDWIGWPLRKDYITPDFYELQDAY</sequence>
<organism>
    <name type="scientific">Synechococcus sp. (strain JA-2-3B'a(2-13))</name>
    <name type="common">Cyanobacteria bacterium Yellowstone B-Prime</name>
    <dbReference type="NCBI Taxonomy" id="321332"/>
    <lineage>
        <taxon>Bacteria</taxon>
        <taxon>Bacillati</taxon>
        <taxon>Cyanobacteriota</taxon>
        <taxon>Cyanophyceae</taxon>
        <taxon>Synechococcales</taxon>
        <taxon>Synechococcaceae</taxon>
        <taxon>Synechococcus</taxon>
    </lineage>
</organism>
<accession>Q2JJA8</accession>
<gene>
    <name evidence="1" type="primary">ndhJ</name>
    <name type="ordered locus">CYB_2334</name>
</gene>
<dbReference type="EC" id="7.1.1.-" evidence="1"/>
<dbReference type="EMBL" id="CP000240">
    <property type="protein sequence ID" value="ABD03273.1"/>
    <property type="molecule type" value="Genomic_DNA"/>
</dbReference>
<dbReference type="RefSeq" id="WP_011433902.1">
    <property type="nucleotide sequence ID" value="NC_007776.1"/>
</dbReference>
<dbReference type="SMR" id="Q2JJA8"/>
<dbReference type="STRING" id="321332.CYB_2334"/>
<dbReference type="KEGG" id="cyb:CYB_2334"/>
<dbReference type="eggNOG" id="COG0852">
    <property type="taxonomic scope" value="Bacteria"/>
</dbReference>
<dbReference type="HOGENOM" id="CLU_042628_9_1_3"/>
<dbReference type="OrthoDB" id="9803286at2"/>
<dbReference type="Proteomes" id="UP000001938">
    <property type="component" value="Chromosome"/>
</dbReference>
<dbReference type="GO" id="GO:0031676">
    <property type="term" value="C:plasma membrane-derived thylakoid membrane"/>
    <property type="evidence" value="ECO:0007669"/>
    <property type="project" value="UniProtKB-SubCell"/>
</dbReference>
<dbReference type="GO" id="GO:0008137">
    <property type="term" value="F:NADH dehydrogenase (ubiquinone) activity"/>
    <property type="evidence" value="ECO:0007669"/>
    <property type="project" value="InterPro"/>
</dbReference>
<dbReference type="GO" id="GO:0048038">
    <property type="term" value="F:quinone binding"/>
    <property type="evidence" value="ECO:0007669"/>
    <property type="project" value="UniProtKB-KW"/>
</dbReference>
<dbReference type="GO" id="GO:0019684">
    <property type="term" value="P:photosynthesis, light reaction"/>
    <property type="evidence" value="ECO:0007669"/>
    <property type="project" value="UniProtKB-UniRule"/>
</dbReference>
<dbReference type="Gene3D" id="3.30.460.80">
    <property type="entry name" value="NADH:ubiquinone oxidoreductase, 30kDa subunit"/>
    <property type="match status" value="1"/>
</dbReference>
<dbReference type="HAMAP" id="MF_01357">
    <property type="entry name" value="NDH1_NuoC"/>
    <property type="match status" value="1"/>
</dbReference>
<dbReference type="InterPro" id="IPR010218">
    <property type="entry name" value="NADH_DH_suC"/>
</dbReference>
<dbReference type="InterPro" id="IPR037232">
    <property type="entry name" value="NADH_quin_OxRdtase_su_C/D-like"/>
</dbReference>
<dbReference type="InterPro" id="IPR001268">
    <property type="entry name" value="NADH_UbQ_OxRdtase_30kDa_su"/>
</dbReference>
<dbReference type="InterPro" id="IPR020396">
    <property type="entry name" value="NADH_UbQ_OxRdtase_CS"/>
</dbReference>
<dbReference type="NCBIfam" id="NF009141">
    <property type="entry name" value="PRK12494.1"/>
    <property type="match status" value="1"/>
</dbReference>
<dbReference type="PANTHER" id="PTHR10884:SF14">
    <property type="entry name" value="NADH DEHYDROGENASE [UBIQUINONE] IRON-SULFUR PROTEIN 3, MITOCHONDRIAL"/>
    <property type="match status" value="1"/>
</dbReference>
<dbReference type="PANTHER" id="PTHR10884">
    <property type="entry name" value="NADH DEHYDROGENASE UBIQUINONE IRON-SULFUR PROTEIN 3"/>
    <property type="match status" value="1"/>
</dbReference>
<dbReference type="Pfam" id="PF00329">
    <property type="entry name" value="Complex1_30kDa"/>
    <property type="match status" value="1"/>
</dbReference>
<dbReference type="SUPFAM" id="SSF143243">
    <property type="entry name" value="Nqo5-like"/>
    <property type="match status" value="1"/>
</dbReference>
<dbReference type="PROSITE" id="PS00542">
    <property type="entry name" value="COMPLEX1_30K"/>
    <property type="match status" value="1"/>
</dbReference>
<name>NDHJ_SYNJB</name>
<evidence type="ECO:0000255" key="1">
    <source>
        <dbReference type="HAMAP-Rule" id="MF_01357"/>
    </source>
</evidence>
<evidence type="ECO:0000256" key="2">
    <source>
        <dbReference type="SAM" id="MobiDB-lite"/>
    </source>
</evidence>
<proteinExistence type="inferred from homology"/>
<comment type="function">
    <text evidence="1">NDH-1 shuttles electrons from an unknown electron donor, via FMN and iron-sulfur (Fe-S) centers, to quinones in the respiratory and/or the photosynthetic chain. The immediate electron acceptor for the enzyme in this species is believed to be plastoquinone. Couples the redox reaction to proton translocation, and thus conserves the redox energy in a proton gradient. Cyanobacterial NDH-1 also plays a role in inorganic carbon-concentration.</text>
</comment>
<comment type="catalytic activity">
    <reaction evidence="1">
        <text>a plastoquinone + NADH + (n+1) H(+)(in) = a plastoquinol + NAD(+) + n H(+)(out)</text>
        <dbReference type="Rhea" id="RHEA:42608"/>
        <dbReference type="Rhea" id="RHEA-COMP:9561"/>
        <dbReference type="Rhea" id="RHEA-COMP:9562"/>
        <dbReference type="ChEBI" id="CHEBI:15378"/>
        <dbReference type="ChEBI" id="CHEBI:17757"/>
        <dbReference type="ChEBI" id="CHEBI:57540"/>
        <dbReference type="ChEBI" id="CHEBI:57945"/>
        <dbReference type="ChEBI" id="CHEBI:62192"/>
    </reaction>
</comment>
<comment type="catalytic activity">
    <reaction evidence="1">
        <text>a plastoquinone + NADPH + (n+1) H(+)(in) = a plastoquinol + NADP(+) + n H(+)(out)</text>
        <dbReference type="Rhea" id="RHEA:42612"/>
        <dbReference type="Rhea" id="RHEA-COMP:9561"/>
        <dbReference type="Rhea" id="RHEA-COMP:9562"/>
        <dbReference type="ChEBI" id="CHEBI:15378"/>
        <dbReference type="ChEBI" id="CHEBI:17757"/>
        <dbReference type="ChEBI" id="CHEBI:57783"/>
        <dbReference type="ChEBI" id="CHEBI:58349"/>
        <dbReference type="ChEBI" id="CHEBI:62192"/>
    </reaction>
</comment>
<comment type="subunit">
    <text evidence="1">NDH-1 can be composed of about 15 different subunits; different subcomplexes with different compositions have been identified which probably have different functions.</text>
</comment>
<comment type="subcellular location">
    <subcellularLocation>
        <location evidence="1">Cellular thylakoid membrane</location>
        <topology evidence="1">Peripheral membrane protein</topology>
        <orientation evidence="1">Cytoplasmic side</orientation>
    </subcellularLocation>
</comment>
<comment type="similarity">
    <text evidence="1">Belongs to the complex I 30 kDa subunit family.</text>
</comment>